<evidence type="ECO:0000303" key="1">
    <source>
    </source>
</evidence>
<evidence type="ECO:0000305" key="2"/>
<gene>
    <name type="primary">RPL18A1</name>
    <name type="ordered locus">At1g29970</name>
    <name type="ORF">T1P2.8</name>
</gene>
<comment type="alternative products">
    <event type="alternative splicing"/>
    <isoform>
        <id>Q8L9S1-1</id>
        <name>1</name>
        <sequence type="displayed"/>
    </isoform>
    <text>A number of isoforms are produced. According to EST sequences.</text>
</comment>
<comment type="similarity">
    <text evidence="2">Belongs to the eukaryotic ribosomal protein eL20 family.</text>
</comment>
<comment type="caution">
    <text evidence="1">Has been suggested to be a pseudogene, RNA seq evidence shows this is transcribed.</text>
</comment>
<comment type="sequence caution" evidence="2">
    <conflict type="erroneous gene model prediction">
        <sequence resource="EMBL-CDS" id="AAG52055"/>
    </conflict>
</comment>
<name>R18A1_ARATH</name>
<organism>
    <name type="scientific">Arabidopsis thaliana</name>
    <name type="common">Mouse-ear cress</name>
    <dbReference type="NCBI Taxonomy" id="3702"/>
    <lineage>
        <taxon>Eukaryota</taxon>
        <taxon>Viridiplantae</taxon>
        <taxon>Streptophyta</taxon>
        <taxon>Embryophyta</taxon>
        <taxon>Tracheophyta</taxon>
        <taxon>Spermatophyta</taxon>
        <taxon>Magnoliopsida</taxon>
        <taxon>eudicotyledons</taxon>
        <taxon>Gunneridae</taxon>
        <taxon>Pentapetalae</taxon>
        <taxon>rosids</taxon>
        <taxon>malvids</taxon>
        <taxon>Brassicales</taxon>
        <taxon>Brassicaceae</taxon>
        <taxon>Camelineae</taxon>
        <taxon>Arabidopsis</taxon>
    </lineage>
</organism>
<reference key="1">
    <citation type="journal article" date="2000" name="Nature">
        <title>Sequence and analysis of chromosome 1 of the plant Arabidopsis thaliana.</title>
        <authorList>
            <person name="Theologis A."/>
            <person name="Ecker J.R."/>
            <person name="Palm C.J."/>
            <person name="Federspiel N.A."/>
            <person name="Kaul S."/>
            <person name="White O."/>
            <person name="Alonso J."/>
            <person name="Altafi H."/>
            <person name="Araujo R."/>
            <person name="Bowman C.L."/>
            <person name="Brooks S.Y."/>
            <person name="Buehler E."/>
            <person name="Chan A."/>
            <person name="Chao Q."/>
            <person name="Chen H."/>
            <person name="Cheuk R.F."/>
            <person name="Chin C.W."/>
            <person name="Chung M.K."/>
            <person name="Conn L."/>
            <person name="Conway A.B."/>
            <person name="Conway A.R."/>
            <person name="Creasy T.H."/>
            <person name="Dewar K."/>
            <person name="Dunn P."/>
            <person name="Etgu P."/>
            <person name="Feldblyum T.V."/>
            <person name="Feng J.-D."/>
            <person name="Fong B."/>
            <person name="Fujii C.Y."/>
            <person name="Gill J.E."/>
            <person name="Goldsmith A.D."/>
            <person name="Haas B."/>
            <person name="Hansen N.F."/>
            <person name="Hughes B."/>
            <person name="Huizar L."/>
            <person name="Hunter J.L."/>
            <person name="Jenkins J."/>
            <person name="Johnson-Hopson C."/>
            <person name="Khan S."/>
            <person name="Khaykin E."/>
            <person name="Kim C.J."/>
            <person name="Koo H.L."/>
            <person name="Kremenetskaia I."/>
            <person name="Kurtz D.B."/>
            <person name="Kwan A."/>
            <person name="Lam B."/>
            <person name="Langin-Hooper S."/>
            <person name="Lee A."/>
            <person name="Lee J.M."/>
            <person name="Lenz C.A."/>
            <person name="Li J.H."/>
            <person name="Li Y.-P."/>
            <person name="Lin X."/>
            <person name="Liu S.X."/>
            <person name="Liu Z.A."/>
            <person name="Luros J.S."/>
            <person name="Maiti R."/>
            <person name="Marziali A."/>
            <person name="Militscher J."/>
            <person name="Miranda M."/>
            <person name="Nguyen M."/>
            <person name="Nierman W.C."/>
            <person name="Osborne B.I."/>
            <person name="Pai G."/>
            <person name="Peterson J."/>
            <person name="Pham P.K."/>
            <person name="Rizzo M."/>
            <person name="Rooney T."/>
            <person name="Rowley D."/>
            <person name="Sakano H."/>
            <person name="Salzberg S.L."/>
            <person name="Schwartz J.R."/>
            <person name="Shinn P."/>
            <person name="Southwick A.M."/>
            <person name="Sun H."/>
            <person name="Tallon L.J."/>
            <person name="Tambunga G."/>
            <person name="Toriumi M.J."/>
            <person name="Town C.D."/>
            <person name="Utterback T."/>
            <person name="Van Aken S."/>
            <person name="Vaysberg M."/>
            <person name="Vysotskaia V.S."/>
            <person name="Walker M."/>
            <person name="Wu D."/>
            <person name="Yu G."/>
            <person name="Fraser C.M."/>
            <person name="Venter J.C."/>
            <person name="Davis R.W."/>
        </authorList>
    </citation>
    <scope>NUCLEOTIDE SEQUENCE [LARGE SCALE GENOMIC DNA]</scope>
    <source>
        <strain>cv. Columbia</strain>
    </source>
</reference>
<reference key="2">
    <citation type="journal article" date="2017" name="Plant J.">
        <title>Araport11: a complete reannotation of the Arabidopsis thaliana reference genome.</title>
        <authorList>
            <person name="Cheng C.Y."/>
            <person name="Krishnakumar V."/>
            <person name="Chan A.P."/>
            <person name="Thibaud-Nissen F."/>
            <person name="Schobel S."/>
            <person name="Town C.D."/>
        </authorList>
    </citation>
    <scope>GENOME REANNOTATION</scope>
    <source>
        <strain>cv. Columbia</strain>
    </source>
</reference>
<reference key="3">
    <citation type="submission" date="2002-03" db="EMBL/GenBank/DDBJ databases">
        <title>Full-length cDNA from Arabidopsis thaliana.</title>
        <authorList>
            <person name="Brover V.V."/>
            <person name="Troukhan M.E."/>
            <person name="Alexandrov N.A."/>
            <person name="Lu Y.-P."/>
            <person name="Flavell R.B."/>
            <person name="Feldmann K.A."/>
        </authorList>
    </citation>
    <scope>NUCLEOTIDE SEQUENCE [LARGE SCALE MRNA]</scope>
</reference>
<reference key="4">
    <citation type="journal article" date="2001" name="Plant Physiol.">
        <title>The organization of cytoplasmic ribosomal protein genes in the Arabidopsis genome.</title>
        <authorList>
            <person name="Barakat A."/>
            <person name="Szick-Miranda K."/>
            <person name="Chang I.-F."/>
            <person name="Guyot R."/>
            <person name="Blanc G."/>
            <person name="Cooke R."/>
            <person name="Delseny M."/>
            <person name="Bailey-Serres J."/>
        </authorList>
    </citation>
    <scope>GENE FAMILY ORGANIZATION</scope>
    <scope>NOMENCLATURE</scope>
</reference>
<reference key="5">
    <citation type="journal article" date="2023" name="Plant Cell">
        <title>An updated nomenclature for plant ribosomal protein genes.</title>
        <authorList>
            <person name="Scarpin M.R."/>
            <person name="Busche M."/>
            <person name="Martinez R.E."/>
            <person name="Harper L.C."/>
            <person name="Reiser L."/>
            <person name="Szakonyi D."/>
            <person name="Merchante C."/>
            <person name="Lan T."/>
            <person name="Xiong W."/>
            <person name="Mo B."/>
            <person name="Tang G."/>
            <person name="Chen X."/>
            <person name="Bailey-Serres J."/>
            <person name="Browning K.S."/>
            <person name="Brunkard J.O."/>
        </authorList>
    </citation>
    <scope>NOMENCLATURE</scope>
</reference>
<proteinExistence type="evidence at transcript level"/>
<protein>
    <recommendedName>
        <fullName evidence="1 2">Large ribosomal subunit protein eL20z</fullName>
    </recommendedName>
    <alternativeName>
        <fullName>60S ribosomal protein L18a-1</fullName>
    </alternativeName>
</protein>
<dbReference type="EMBL" id="AC022455">
    <property type="protein sequence ID" value="AAG52055.1"/>
    <property type="status" value="ALT_SEQ"/>
    <property type="molecule type" value="Genomic_DNA"/>
</dbReference>
<dbReference type="EMBL" id="CP002684">
    <property type="protein sequence ID" value="AEE31160.1"/>
    <property type="molecule type" value="Genomic_DNA"/>
</dbReference>
<dbReference type="EMBL" id="AY088264">
    <property type="protein sequence ID" value="AAM65804.1"/>
    <property type="molecule type" value="mRNA"/>
</dbReference>
<dbReference type="PIR" id="E86423">
    <property type="entry name" value="E86423"/>
</dbReference>
<dbReference type="RefSeq" id="NP_564343.1">
    <molecule id="Q8L9S1-1"/>
    <property type="nucleotide sequence ID" value="NM_102737.3"/>
</dbReference>
<dbReference type="BioGRID" id="25111">
    <property type="interactions" value="37"/>
</dbReference>
<dbReference type="FunCoup" id="Q8L9S1">
    <property type="interactions" value="31"/>
</dbReference>
<dbReference type="STRING" id="3702.Q8L9S1"/>
<dbReference type="GlyGen" id="Q8L9S1">
    <property type="glycosylation" value="1 site"/>
</dbReference>
<dbReference type="EnsemblPlants" id="AT1G29970.1">
    <molecule id="Q8L9S1-1"/>
    <property type="protein sequence ID" value="AT1G29970.1"/>
    <property type="gene ID" value="AT1G29970"/>
</dbReference>
<dbReference type="GeneID" id="839876"/>
<dbReference type="Gramene" id="AT1G29970.1">
    <molecule id="Q8L9S1-1"/>
    <property type="protein sequence ID" value="AT1G29970.1"/>
    <property type="gene ID" value="AT1G29970"/>
</dbReference>
<dbReference type="KEGG" id="ath:AT1G29970"/>
<dbReference type="Araport" id="AT1G29970"/>
<dbReference type="TAIR" id="AT1G29970">
    <property type="gene designation" value="RPL18AA"/>
</dbReference>
<dbReference type="InParanoid" id="Q8L9S1"/>
<dbReference type="PhylomeDB" id="Q8L9S1"/>
<dbReference type="Proteomes" id="UP000006548">
    <property type="component" value="Chromosome 1"/>
</dbReference>
<dbReference type="ExpressionAtlas" id="Q8L9S1">
    <property type="expression patterns" value="baseline and differential"/>
</dbReference>
<dbReference type="GO" id="GO:1990904">
    <property type="term" value="C:ribonucleoprotein complex"/>
    <property type="evidence" value="ECO:0007669"/>
    <property type="project" value="UniProtKB-KW"/>
</dbReference>
<dbReference type="GO" id="GO:0005840">
    <property type="term" value="C:ribosome"/>
    <property type="evidence" value="ECO:0007669"/>
    <property type="project" value="UniProtKB-KW"/>
</dbReference>
<dbReference type="InterPro" id="IPR044804">
    <property type="entry name" value="Ribosomal_eL20z-like"/>
</dbReference>
<dbReference type="PANTHER" id="PTHR46631">
    <property type="entry name" value="60S RIBOSOMAL PROTEIN L18A-LIKE"/>
    <property type="match status" value="1"/>
</dbReference>
<dbReference type="PANTHER" id="PTHR46631:SF26">
    <property type="entry name" value="LARGE RIBOSOMAL SUBUNIT PROTEIN EL20Z"/>
    <property type="match status" value="1"/>
</dbReference>
<keyword id="KW-0025">Alternative splicing</keyword>
<keyword id="KW-1185">Reference proteome</keyword>
<keyword id="KW-0687">Ribonucleoprotein</keyword>
<keyword id="KW-0689">Ribosomal protein</keyword>
<accession>Q8L9S1</accession>
<accession>Q9C8S2</accession>
<sequence length="158" mass="17473">MDEEAAKPRDSTVNQQHQYYYGTFQGVANFPTPTPPPQFMQPQHPITTFPGHAYQNLQGHGGGVNYAQGFPVVVPDYTVVEVRPMIEHELPCCGLGMGWFLFIMGFLFGGIPWYLGAFIVLVTSVDHREKAGYVACSIASVVYLIAVMLGMTGDINIW</sequence>
<feature type="chain" id="PRO_0000240521" description="Large ribosomal subunit protein eL20z">
    <location>
        <begin position="1"/>
        <end position="158"/>
    </location>
</feature>
<feature type="sequence conflict" description="In Ref. 3; AAM65804." evidence="2" ref="3">
    <original>T</original>
    <variation>A</variation>
    <location>
        <position position="34"/>
    </location>
</feature>